<organism>
    <name type="scientific">Drosophila ananassae</name>
    <name type="common">Fruit fly</name>
    <dbReference type="NCBI Taxonomy" id="7217"/>
    <lineage>
        <taxon>Eukaryota</taxon>
        <taxon>Metazoa</taxon>
        <taxon>Ecdysozoa</taxon>
        <taxon>Arthropoda</taxon>
        <taxon>Hexapoda</taxon>
        <taxon>Insecta</taxon>
        <taxon>Pterygota</taxon>
        <taxon>Neoptera</taxon>
        <taxon>Endopterygota</taxon>
        <taxon>Diptera</taxon>
        <taxon>Brachycera</taxon>
        <taxon>Muscomorpha</taxon>
        <taxon>Ephydroidea</taxon>
        <taxon>Drosophilidae</taxon>
        <taxon>Drosophila</taxon>
        <taxon>Sophophora</taxon>
    </lineage>
</organism>
<accession>B3M7M6</accession>
<proteinExistence type="inferred from homology"/>
<evidence type="ECO:0000305" key="1"/>
<comment type="similarity">
    <text evidence="1">Belongs to the SOSS-C family.</text>
</comment>
<keyword id="KW-1185">Reference proteome</keyword>
<protein>
    <recommendedName>
        <fullName>SOSS complex subunit C homolog</fullName>
    </recommendedName>
</protein>
<gene>
    <name type="ORF">GF23665</name>
</gene>
<name>SOSSC_DROAN</name>
<reference key="1">
    <citation type="journal article" date="2007" name="Nature">
        <title>Evolution of genes and genomes on the Drosophila phylogeny.</title>
        <authorList>
            <consortium name="Drosophila 12 genomes consortium"/>
        </authorList>
    </citation>
    <scope>NUCLEOTIDE SEQUENCE [LARGE SCALE GENOMIC DNA]</scope>
    <source>
        <strain>Tucson 14024-0371.13</strain>
    </source>
</reference>
<sequence length="123" mass="12927">MAFPTTSAQQADTTRKILEEIQTKKQLLAGGIINLGINTQMSTPQLLGQPTTVTPDFQLGVGGVAANATPTARAAFNPTSSTTLGFFVPQDSYFGNSFLPVLPRLEPLPSSIATPPATPINNK</sequence>
<feature type="chain" id="PRO_0000385319" description="SOSS complex subunit C homolog">
    <location>
        <begin position="1"/>
        <end position="123"/>
    </location>
</feature>
<dbReference type="EMBL" id="CH902618">
    <property type="protein sequence ID" value="EDV40954.1"/>
    <property type="molecule type" value="Genomic_DNA"/>
</dbReference>
<dbReference type="SMR" id="B3M7M6"/>
<dbReference type="FunCoup" id="B3M7M6">
    <property type="interactions" value="410"/>
</dbReference>
<dbReference type="STRING" id="7217.B3M7M6"/>
<dbReference type="EnsemblMetazoa" id="FBtr0128365">
    <property type="protein sequence ID" value="FBpp0126857"/>
    <property type="gene ID" value="FBgn0100659"/>
</dbReference>
<dbReference type="EnsemblMetazoa" id="XM_001958112.3">
    <property type="protein sequence ID" value="XP_001958148.1"/>
    <property type="gene ID" value="LOC6506306"/>
</dbReference>
<dbReference type="GeneID" id="6506306"/>
<dbReference type="KEGG" id="dan:6506306"/>
<dbReference type="eggNOG" id="KOG3420">
    <property type="taxonomic scope" value="Eukaryota"/>
</dbReference>
<dbReference type="HOGENOM" id="CLU_145773_0_0_1"/>
<dbReference type="InParanoid" id="B3M7M6"/>
<dbReference type="OMA" id="VMETQHM"/>
<dbReference type="OrthoDB" id="419617at2759"/>
<dbReference type="PhylomeDB" id="B3M7M6"/>
<dbReference type="Proteomes" id="UP000007801">
    <property type="component" value="Unassembled WGS sequence"/>
</dbReference>
<dbReference type="GO" id="GO:0005654">
    <property type="term" value="C:nucleoplasm"/>
    <property type="evidence" value="ECO:0007669"/>
    <property type="project" value="TreeGrafter"/>
</dbReference>
<dbReference type="GO" id="GO:0070876">
    <property type="term" value="C:SOSS complex"/>
    <property type="evidence" value="ECO:0007669"/>
    <property type="project" value="InterPro"/>
</dbReference>
<dbReference type="GO" id="GO:0006281">
    <property type="term" value="P:DNA repair"/>
    <property type="evidence" value="ECO:0007669"/>
    <property type="project" value="InterPro"/>
</dbReference>
<dbReference type="InterPro" id="IPR031821">
    <property type="entry name" value="SOSSC"/>
</dbReference>
<dbReference type="PANTHER" id="PTHR31526">
    <property type="entry name" value="SOSS COMPLEX SUBUNIT C"/>
    <property type="match status" value="1"/>
</dbReference>
<dbReference type="PANTHER" id="PTHR31526:SF2">
    <property type="entry name" value="SOSS COMPLEX SUBUNIT C"/>
    <property type="match status" value="1"/>
</dbReference>
<dbReference type="Pfam" id="PF15925">
    <property type="entry name" value="SOSSC"/>
    <property type="match status" value="1"/>
</dbReference>